<organism>
    <name type="scientific">Escherichia coli O17:K52:H18 (strain UMN026 / ExPEC)</name>
    <dbReference type="NCBI Taxonomy" id="585056"/>
    <lineage>
        <taxon>Bacteria</taxon>
        <taxon>Pseudomonadati</taxon>
        <taxon>Pseudomonadota</taxon>
        <taxon>Gammaproteobacteria</taxon>
        <taxon>Enterobacterales</taxon>
        <taxon>Enterobacteriaceae</taxon>
        <taxon>Escherichia</taxon>
    </lineage>
</organism>
<sequence>MKIVEVKHPLVKHKLGLMREQDISTKRFRELASEVGSLLTYEATADLETEKVTIEGWNGPVEIDQIKGKKITVVPILRAGLGMMDGVLENVPSARISVVGMYRNEETLEPVPYFQKLVSNIDERMALIVDPMLATGGSVIATIDLLKKAGCSSIKVLVLVAAPEGIAALEKAHPDVELYTASIDQGLNEHGYIIPGLGDAGDKIFGTK</sequence>
<gene>
    <name evidence="1" type="primary">upp</name>
    <name type="ordered locus">ECUMN_2811</name>
</gene>
<evidence type="ECO:0000255" key="1">
    <source>
        <dbReference type="HAMAP-Rule" id="MF_01218"/>
    </source>
</evidence>
<protein>
    <recommendedName>
        <fullName evidence="1">Uracil phosphoribosyltransferase</fullName>
        <ecNumber evidence="1">2.4.2.9</ecNumber>
    </recommendedName>
    <alternativeName>
        <fullName evidence="1">UMP pyrophosphorylase</fullName>
    </alternativeName>
    <alternativeName>
        <fullName evidence="1">UPRTase</fullName>
    </alternativeName>
</protein>
<reference key="1">
    <citation type="journal article" date="2009" name="PLoS Genet.">
        <title>Organised genome dynamics in the Escherichia coli species results in highly diverse adaptive paths.</title>
        <authorList>
            <person name="Touchon M."/>
            <person name="Hoede C."/>
            <person name="Tenaillon O."/>
            <person name="Barbe V."/>
            <person name="Baeriswyl S."/>
            <person name="Bidet P."/>
            <person name="Bingen E."/>
            <person name="Bonacorsi S."/>
            <person name="Bouchier C."/>
            <person name="Bouvet O."/>
            <person name="Calteau A."/>
            <person name="Chiapello H."/>
            <person name="Clermont O."/>
            <person name="Cruveiller S."/>
            <person name="Danchin A."/>
            <person name="Diard M."/>
            <person name="Dossat C."/>
            <person name="Karoui M.E."/>
            <person name="Frapy E."/>
            <person name="Garry L."/>
            <person name="Ghigo J.M."/>
            <person name="Gilles A.M."/>
            <person name="Johnson J."/>
            <person name="Le Bouguenec C."/>
            <person name="Lescat M."/>
            <person name="Mangenot S."/>
            <person name="Martinez-Jehanne V."/>
            <person name="Matic I."/>
            <person name="Nassif X."/>
            <person name="Oztas S."/>
            <person name="Petit M.A."/>
            <person name="Pichon C."/>
            <person name="Rouy Z."/>
            <person name="Ruf C.S."/>
            <person name="Schneider D."/>
            <person name="Tourret J."/>
            <person name="Vacherie B."/>
            <person name="Vallenet D."/>
            <person name="Medigue C."/>
            <person name="Rocha E.P.C."/>
            <person name="Denamur E."/>
        </authorList>
    </citation>
    <scope>NUCLEOTIDE SEQUENCE [LARGE SCALE GENOMIC DNA]</scope>
    <source>
        <strain>UMN026 / ExPEC</strain>
    </source>
</reference>
<comment type="function">
    <text evidence="1">Catalyzes the conversion of uracil and 5-phospho-alpha-D-ribose 1-diphosphate (PRPP) to UMP and diphosphate.</text>
</comment>
<comment type="catalytic activity">
    <reaction evidence="1">
        <text>UMP + diphosphate = 5-phospho-alpha-D-ribose 1-diphosphate + uracil</text>
        <dbReference type="Rhea" id="RHEA:13017"/>
        <dbReference type="ChEBI" id="CHEBI:17568"/>
        <dbReference type="ChEBI" id="CHEBI:33019"/>
        <dbReference type="ChEBI" id="CHEBI:57865"/>
        <dbReference type="ChEBI" id="CHEBI:58017"/>
        <dbReference type="EC" id="2.4.2.9"/>
    </reaction>
</comment>
<comment type="cofactor">
    <cofactor evidence="1">
        <name>Mg(2+)</name>
        <dbReference type="ChEBI" id="CHEBI:18420"/>
    </cofactor>
    <text evidence="1">Binds 1 Mg(2+) ion per subunit. The magnesium is bound as Mg-PRPP.</text>
</comment>
<comment type="activity regulation">
    <text evidence="1">Allosterically activated by GTP.</text>
</comment>
<comment type="pathway">
    <text evidence="1">Pyrimidine metabolism; UMP biosynthesis via salvage pathway; UMP from uracil: step 1/1.</text>
</comment>
<comment type="similarity">
    <text evidence="1">Belongs to the UPRTase family.</text>
</comment>
<feature type="chain" id="PRO_1000139122" description="Uracil phosphoribosyltransferase">
    <location>
        <begin position="1"/>
        <end position="208"/>
    </location>
</feature>
<feature type="binding site" evidence="1">
    <location>
        <position position="78"/>
    </location>
    <ligand>
        <name>5-phospho-alpha-D-ribose 1-diphosphate</name>
        <dbReference type="ChEBI" id="CHEBI:58017"/>
    </ligand>
</feature>
<feature type="binding site" evidence="1">
    <location>
        <position position="103"/>
    </location>
    <ligand>
        <name>5-phospho-alpha-D-ribose 1-diphosphate</name>
        <dbReference type="ChEBI" id="CHEBI:58017"/>
    </ligand>
</feature>
<feature type="binding site" evidence="1">
    <location>
        <begin position="130"/>
        <end position="138"/>
    </location>
    <ligand>
        <name>5-phospho-alpha-D-ribose 1-diphosphate</name>
        <dbReference type="ChEBI" id="CHEBI:58017"/>
    </ligand>
</feature>
<feature type="binding site" evidence="1">
    <location>
        <position position="193"/>
    </location>
    <ligand>
        <name>uracil</name>
        <dbReference type="ChEBI" id="CHEBI:17568"/>
    </ligand>
</feature>
<feature type="binding site" evidence="1">
    <location>
        <begin position="198"/>
        <end position="200"/>
    </location>
    <ligand>
        <name>uracil</name>
        <dbReference type="ChEBI" id="CHEBI:17568"/>
    </ligand>
</feature>
<feature type="binding site" evidence="1">
    <location>
        <position position="199"/>
    </location>
    <ligand>
        <name>5-phospho-alpha-D-ribose 1-diphosphate</name>
        <dbReference type="ChEBI" id="CHEBI:58017"/>
    </ligand>
</feature>
<name>UPP_ECOLU</name>
<accession>B7N680</accession>
<dbReference type="EC" id="2.4.2.9" evidence="1"/>
<dbReference type="EMBL" id="CU928163">
    <property type="protein sequence ID" value="CAR13989.1"/>
    <property type="molecule type" value="Genomic_DNA"/>
</dbReference>
<dbReference type="RefSeq" id="WP_001295473.1">
    <property type="nucleotide sequence ID" value="NC_011751.1"/>
</dbReference>
<dbReference type="RefSeq" id="YP_002413516.1">
    <property type="nucleotide sequence ID" value="NC_011751.1"/>
</dbReference>
<dbReference type="SMR" id="B7N680"/>
<dbReference type="STRING" id="585056.ECUMN_2811"/>
<dbReference type="GeneID" id="93774638"/>
<dbReference type="KEGG" id="eum:ECUMN_2811"/>
<dbReference type="PATRIC" id="fig|585056.7.peg.2996"/>
<dbReference type="HOGENOM" id="CLU_067096_2_2_6"/>
<dbReference type="UniPathway" id="UPA00574">
    <property type="reaction ID" value="UER00636"/>
</dbReference>
<dbReference type="Proteomes" id="UP000007097">
    <property type="component" value="Chromosome"/>
</dbReference>
<dbReference type="GO" id="GO:0005525">
    <property type="term" value="F:GTP binding"/>
    <property type="evidence" value="ECO:0007669"/>
    <property type="project" value="UniProtKB-KW"/>
</dbReference>
<dbReference type="GO" id="GO:0000287">
    <property type="term" value="F:magnesium ion binding"/>
    <property type="evidence" value="ECO:0007669"/>
    <property type="project" value="UniProtKB-UniRule"/>
</dbReference>
<dbReference type="GO" id="GO:0004845">
    <property type="term" value="F:uracil phosphoribosyltransferase activity"/>
    <property type="evidence" value="ECO:0007669"/>
    <property type="project" value="UniProtKB-UniRule"/>
</dbReference>
<dbReference type="GO" id="GO:0044206">
    <property type="term" value="P:UMP salvage"/>
    <property type="evidence" value="ECO:0007669"/>
    <property type="project" value="UniProtKB-UniRule"/>
</dbReference>
<dbReference type="GO" id="GO:0006223">
    <property type="term" value="P:uracil salvage"/>
    <property type="evidence" value="ECO:0007669"/>
    <property type="project" value="InterPro"/>
</dbReference>
<dbReference type="CDD" id="cd06223">
    <property type="entry name" value="PRTases_typeI"/>
    <property type="match status" value="1"/>
</dbReference>
<dbReference type="FunFam" id="3.40.50.2020:FF:000003">
    <property type="entry name" value="Uracil phosphoribosyltransferase"/>
    <property type="match status" value="1"/>
</dbReference>
<dbReference type="Gene3D" id="3.40.50.2020">
    <property type="match status" value="1"/>
</dbReference>
<dbReference type="HAMAP" id="MF_01218_B">
    <property type="entry name" value="Upp_B"/>
    <property type="match status" value="1"/>
</dbReference>
<dbReference type="InterPro" id="IPR000836">
    <property type="entry name" value="PRibTrfase_dom"/>
</dbReference>
<dbReference type="InterPro" id="IPR029057">
    <property type="entry name" value="PRTase-like"/>
</dbReference>
<dbReference type="InterPro" id="IPR034332">
    <property type="entry name" value="Upp_B"/>
</dbReference>
<dbReference type="InterPro" id="IPR050054">
    <property type="entry name" value="UPRTase/APRTase"/>
</dbReference>
<dbReference type="InterPro" id="IPR005765">
    <property type="entry name" value="Ura_phspho_trans"/>
</dbReference>
<dbReference type="NCBIfam" id="NF001097">
    <property type="entry name" value="PRK00129.1"/>
    <property type="match status" value="1"/>
</dbReference>
<dbReference type="NCBIfam" id="TIGR01091">
    <property type="entry name" value="upp"/>
    <property type="match status" value="1"/>
</dbReference>
<dbReference type="PANTHER" id="PTHR32315">
    <property type="entry name" value="ADENINE PHOSPHORIBOSYLTRANSFERASE"/>
    <property type="match status" value="1"/>
</dbReference>
<dbReference type="PANTHER" id="PTHR32315:SF4">
    <property type="entry name" value="URACIL PHOSPHORIBOSYLTRANSFERASE, CHLOROPLASTIC"/>
    <property type="match status" value="1"/>
</dbReference>
<dbReference type="Pfam" id="PF14681">
    <property type="entry name" value="UPRTase"/>
    <property type="match status" value="1"/>
</dbReference>
<dbReference type="SUPFAM" id="SSF53271">
    <property type="entry name" value="PRTase-like"/>
    <property type="match status" value="1"/>
</dbReference>
<proteinExistence type="inferred from homology"/>
<keyword id="KW-0021">Allosteric enzyme</keyword>
<keyword id="KW-0328">Glycosyltransferase</keyword>
<keyword id="KW-0342">GTP-binding</keyword>
<keyword id="KW-0460">Magnesium</keyword>
<keyword id="KW-0547">Nucleotide-binding</keyword>
<keyword id="KW-0808">Transferase</keyword>